<protein>
    <recommendedName>
        <fullName>Neurochondrin homolog</fullName>
    </recommendedName>
    <alternativeName>
        <fullName>dNeurochondrin</fullName>
    </alternativeName>
</protein>
<evidence type="ECO:0000269" key="1">
    <source>
    </source>
</evidence>
<evidence type="ECO:0000305" key="2"/>
<reference key="1">
    <citation type="journal article" date="2000" name="Science">
        <title>The genome sequence of Drosophila melanogaster.</title>
        <authorList>
            <person name="Adams M.D."/>
            <person name="Celniker S.E."/>
            <person name="Holt R.A."/>
            <person name="Evans C.A."/>
            <person name="Gocayne J.D."/>
            <person name="Amanatides P.G."/>
            <person name="Scherer S.E."/>
            <person name="Li P.W."/>
            <person name="Hoskins R.A."/>
            <person name="Galle R.F."/>
            <person name="George R.A."/>
            <person name="Lewis S.E."/>
            <person name="Richards S."/>
            <person name="Ashburner M."/>
            <person name="Henderson S.N."/>
            <person name="Sutton G.G."/>
            <person name="Wortman J.R."/>
            <person name="Yandell M.D."/>
            <person name="Zhang Q."/>
            <person name="Chen L.X."/>
            <person name="Brandon R.C."/>
            <person name="Rogers Y.-H.C."/>
            <person name="Blazej R.G."/>
            <person name="Champe M."/>
            <person name="Pfeiffer B.D."/>
            <person name="Wan K.H."/>
            <person name="Doyle C."/>
            <person name="Baxter E.G."/>
            <person name="Helt G."/>
            <person name="Nelson C.R."/>
            <person name="Miklos G.L.G."/>
            <person name="Abril J.F."/>
            <person name="Agbayani A."/>
            <person name="An H.-J."/>
            <person name="Andrews-Pfannkoch C."/>
            <person name="Baldwin D."/>
            <person name="Ballew R.M."/>
            <person name="Basu A."/>
            <person name="Baxendale J."/>
            <person name="Bayraktaroglu L."/>
            <person name="Beasley E.M."/>
            <person name="Beeson K.Y."/>
            <person name="Benos P.V."/>
            <person name="Berman B.P."/>
            <person name="Bhandari D."/>
            <person name="Bolshakov S."/>
            <person name="Borkova D."/>
            <person name="Botchan M.R."/>
            <person name="Bouck J."/>
            <person name="Brokstein P."/>
            <person name="Brottier P."/>
            <person name="Burtis K.C."/>
            <person name="Busam D.A."/>
            <person name="Butler H."/>
            <person name="Cadieu E."/>
            <person name="Center A."/>
            <person name="Chandra I."/>
            <person name="Cherry J.M."/>
            <person name="Cawley S."/>
            <person name="Dahlke C."/>
            <person name="Davenport L.B."/>
            <person name="Davies P."/>
            <person name="de Pablos B."/>
            <person name="Delcher A."/>
            <person name="Deng Z."/>
            <person name="Mays A.D."/>
            <person name="Dew I."/>
            <person name="Dietz S.M."/>
            <person name="Dodson K."/>
            <person name="Doup L.E."/>
            <person name="Downes M."/>
            <person name="Dugan-Rocha S."/>
            <person name="Dunkov B.C."/>
            <person name="Dunn P."/>
            <person name="Durbin K.J."/>
            <person name="Evangelista C.C."/>
            <person name="Ferraz C."/>
            <person name="Ferriera S."/>
            <person name="Fleischmann W."/>
            <person name="Fosler C."/>
            <person name="Gabrielian A.E."/>
            <person name="Garg N.S."/>
            <person name="Gelbart W.M."/>
            <person name="Glasser K."/>
            <person name="Glodek A."/>
            <person name="Gong F."/>
            <person name="Gorrell J.H."/>
            <person name="Gu Z."/>
            <person name="Guan P."/>
            <person name="Harris M."/>
            <person name="Harris N.L."/>
            <person name="Harvey D.A."/>
            <person name="Heiman T.J."/>
            <person name="Hernandez J.R."/>
            <person name="Houck J."/>
            <person name="Hostin D."/>
            <person name="Houston K.A."/>
            <person name="Howland T.J."/>
            <person name="Wei M.-H."/>
            <person name="Ibegwam C."/>
            <person name="Jalali M."/>
            <person name="Kalush F."/>
            <person name="Karpen G.H."/>
            <person name="Ke Z."/>
            <person name="Kennison J.A."/>
            <person name="Ketchum K.A."/>
            <person name="Kimmel B.E."/>
            <person name="Kodira C.D."/>
            <person name="Kraft C.L."/>
            <person name="Kravitz S."/>
            <person name="Kulp D."/>
            <person name="Lai Z."/>
            <person name="Lasko P."/>
            <person name="Lei Y."/>
            <person name="Levitsky A.A."/>
            <person name="Li J.H."/>
            <person name="Li Z."/>
            <person name="Liang Y."/>
            <person name="Lin X."/>
            <person name="Liu X."/>
            <person name="Mattei B."/>
            <person name="McIntosh T.C."/>
            <person name="McLeod M.P."/>
            <person name="McPherson D."/>
            <person name="Merkulov G."/>
            <person name="Milshina N.V."/>
            <person name="Mobarry C."/>
            <person name="Morris J."/>
            <person name="Moshrefi A."/>
            <person name="Mount S.M."/>
            <person name="Moy M."/>
            <person name="Murphy B."/>
            <person name="Murphy L."/>
            <person name="Muzny D.M."/>
            <person name="Nelson D.L."/>
            <person name="Nelson D.R."/>
            <person name="Nelson K.A."/>
            <person name="Nixon K."/>
            <person name="Nusskern D.R."/>
            <person name="Pacleb J.M."/>
            <person name="Palazzolo M."/>
            <person name="Pittman G.S."/>
            <person name="Pan S."/>
            <person name="Pollard J."/>
            <person name="Puri V."/>
            <person name="Reese M.G."/>
            <person name="Reinert K."/>
            <person name="Remington K."/>
            <person name="Saunders R.D.C."/>
            <person name="Scheeler F."/>
            <person name="Shen H."/>
            <person name="Shue B.C."/>
            <person name="Siden-Kiamos I."/>
            <person name="Simpson M."/>
            <person name="Skupski M.P."/>
            <person name="Smith T.J."/>
            <person name="Spier E."/>
            <person name="Spradling A.C."/>
            <person name="Stapleton M."/>
            <person name="Strong R."/>
            <person name="Sun E."/>
            <person name="Svirskas R."/>
            <person name="Tector C."/>
            <person name="Turner R."/>
            <person name="Venter E."/>
            <person name="Wang A.H."/>
            <person name="Wang X."/>
            <person name="Wang Z.-Y."/>
            <person name="Wassarman D.A."/>
            <person name="Weinstock G.M."/>
            <person name="Weissenbach J."/>
            <person name="Williams S.M."/>
            <person name="Woodage T."/>
            <person name="Worley K.C."/>
            <person name="Wu D."/>
            <person name="Yang S."/>
            <person name="Yao Q.A."/>
            <person name="Ye J."/>
            <person name="Yeh R.-F."/>
            <person name="Zaveri J.S."/>
            <person name="Zhan M."/>
            <person name="Zhang G."/>
            <person name="Zhao Q."/>
            <person name="Zheng L."/>
            <person name="Zheng X.H."/>
            <person name="Zhong F.N."/>
            <person name="Zhong W."/>
            <person name="Zhou X."/>
            <person name="Zhu S.C."/>
            <person name="Zhu X."/>
            <person name="Smith H.O."/>
            <person name="Gibbs R.A."/>
            <person name="Myers E.W."/>
            <person name="Rubin G.M."/>
            <person name="Venter J.C."/>
        </authorList>
    </citation>
    <scope>NUCLEOTIDE SEQUENCE [LARGE SCALE GENOMIC DNA]</scope>
    <source>
        <strain>Berkeley</strain>
    </source>
</reference>
<reference key="2">
    <citation type="journal article" date="2002" name="Genome Biol.">
        <title>Annotation of the Drosophila melanogaster euchromatic genome: a systematic review.</title>
        <authorList>
            <person name="Misra S."/>
            <person name="Crosby M.A."/>
            <person name="Mungall C.J."/>
            <person name="Matthews B.B."/>
            <person name="Campbell K.S."/>
            <person name="Hradecky P."/>
            <person name="Huang Y."/>
            <person name="Kaminker J.S."/>
            <person name="Millburn G.H."/>
            <person name="Prochnik S.E."/>
            <person name="Smith C.D."/>
            <person name="Tupy J.L."/>
            <person name="Whitfield E.J."/>
            <person name="Bayraktaroglu L."/>
            <person name="Berman B.P."/>
            <person name="Bettencourt B.R."/>
            <person name="Celniker S.E."/>
            <person name="de Grey A.D.N.J."/>
            <person name="Drysdale R.A."/>
            <person name="Harris N.L."/>
            <person name="Richter J."/>
            <person name="Russo S."/>
            <person name="Schroeder A.J."/>
            <person name="Shu S.Q."/>
            <person name="Stapleton M."/>
            <person name="Yamada C."/>
            <person name="Ashburner M."/>
            <person name="Gelbart W.M."/>
            <person name="Rubin G.M."/>
            <person name="Lewis S.E."/>
        </authorList>
    </citation>
    <scope>GENOME REANNOTATION</scope>
    <source>
        <strain>Berkeley</strain>
    </source>
</reference>
<reference key="3">
    <citation type="submission" date="2003-01" db="EMBL/GenBank/DDBJ databases">
        <authorList>
            <person name="Stapleton M."/>
            <person name="Brokstein P."/>
            <person name="Hong L."/>
            <person name="Agbayani A."/>
            <person name="Carlson J.W."/>
            <person name="Champe M."/>
            <person name="Chavez C."/>
            <person name="Dorsett V."/>
            <person name="Dresnek D."/>
            <person name="Farfan D."/>
            <person name="Frise E."/>
            <person name="George R.A."/>
            <person name="Gonzalez M."/>
            <person name="Guarin H."/>
            <person name="Kronmiller B."/>
            <person name="Li P.W."/>
            <person name="Liao G."/>
            <person name="Miranda A."/>
            <person name="Mungall C.J."/>
            <person name="Nunoo J."/>
            <person name="Pacleb J.M."/>
            <person name="Paragas V."/>
            <person name="Park S."/>
            <person name="Patel S."/>
            <person name="Phouanenavong S."/>
            <person name="Wan K.H."/>
            <person name="Yu C."/>
            <person name="Lewis S.E."/>
            <person name="Rubin G.M."/>
            <person name="Celniker S.E."/>
        </authorList>
    </citation>
    <scope>NUCLEOTIDE SEQUENCE [LARGE SCALE MRNA] OF 431-723</scope>
    <source>
        <strain>Berkeley</strain>
        <tissue>Embryo</tissue>
    </source>
</reference>
<reference key="4">
    <citation type="journal article" date="2006" name="J. Biol. Chem.">
        <title>Expression profiling of a hypercontraction-induced myopathy in Drosophila suggests a compensatory cytoskeletal remodeling response.</title>
        <authorList>
            <person name="Montana E.S."/>
            <person name="Littleton J.T."/>
        </authorList>
    </citation>
    <scope>IDENTIFICATION</scope>
    <scope>PROBABLE FUNCTION</scope>
    <scope>TISSUE SPECIFICITY</scope>
</reference>
<organism>
    <name type="scientific">Drosophila melanogaster</name>
    <name type="common">Fruit fly</name>
    <dbReference type="NCBI Taxonomy" id="7227"/>
    <lineage>
        <taxon>Eukaryota</taxon>
        <taxon>Metazoa</taxon>
        <taxon>Ecdysozoa</taxon>
        <taxon>Arthropoda</taxon>
        <taxon>Hexapoda</taxon>
        <taxon>Insecta</taxon>
        <taxon>Pterygota</taxon>
        <taxon>Neoptera</taxon>
        <taxon>Endopterygota</taxon>
        <taxon>Diptera</taxon>
        <taxon>Brachycera</taxon>
        <taxon>Muscomorpha</taxon>
        <taxon>Ephydroidea</taxon>
        <taxon>Drosophilidae</taxon>
        <taxon>Drosophila</taxon>
        <taxon>Sophophora</taxon>
    </lineage>
</organism>
<feature type="chain" id="PRO_0000324622" description="Neurochondrin homolog">
    <location>
        <begin position="1"/>
        <end position="723"/>
    </location>
</feature>
<keyword id="KW-1185">Reference proteome</keyword>
<dbReference type="EMBL" id="AE014297">
    <property type="protein sequence ID" value="AAF54119.1"/>
    <property type="molecule type" value="Genomic_DNA"/>
</dbReference>
<dbReference type="EMBL" id="AY118571">
    <property type="protein sequence ID" value="AAM49940.2"/>
    <property type="molecule type" value="mRNA"/>
</dbReference>
<dbReference type="RefSeq" id="NP_649658.1">
    <property type="nucleotide sequence ID" value="NM_141401.2"/>
</dbReference>
<dbReference type="SMR" id="Q9VI25"/>
<dbReference type="BioGRID" id="65997">
    <property type="interactions" value="5"/>
</dbReference>
<dbReference type="FunCoup" id="Q9VI25">
    <property type="interactions" value="103"/>
</dbReference>
<dbReference type="STRING" id="7227.FBpp0081226"/>
<dbReference type="GlyGen" id="Q9VI25">
    <property type="glycosylation" value="1 site"/>
</dbReference>
<dbReference type="PaxDb" id="7227-FBpp0081226"/>
<dbReference type="DNASU" id="40796"/>
<dbReference type="EnsemblMetazoa" id="FBtr0081729">
    <property type="protein sequence ID" value="FBpp0081226"/>
    <property type="gene ID" value="FBgn0037447"/>
</dbReference>
<dbReference type="GeneID" id="40796"/>
<dbReference type="KEGG" id="dme:Dmel_CG2330"/>
<dbReference type="UCSC" id="CG2330-RA">
    <property type="organism name" value="d. melanogaster"/>
</dbReference>
<dbReference type="AGR" id="FB:FBgn0037447"/>
<dbReference type="CTD" id="40796"/>
<dbReference type="FlyBase" id="FBgn0037447">
    <property type="gene designation" value="Neurochondrin"/>
</dbReference>
<dbReference type="VEuPathDB" id="VectorBase:FBgn0037447"/>
<dbReference type="eggNOG" id="KOG2611">
    <property type="taxonomic scope" value="Eukaryota"/>
</dbReference>
<dbReference type="GeneTree" id="ENSGT00390000013601"/>
<dbReference type="HOGENOM" id="CLU_012443_0_0_1"/>
<dbReference type="InParanoid" id="Q9VI25"/>
<dbReference type="OMA" id="IVHYKKP"/>
<dbReference type="OrthoDB" id="8186546at2759"/>
<dbReference type="PhylomeDB" id="Q9VI25"/>
<dbReference type="BioGRID-ORCS" id="40796">
    <property type="hits" value="0 hits in 1 CRISPR screen"/>
</dbReference>
<dbReference type="ChiTaRS" id="Neurochondrin">
    <property type="organism name" value="fly"/>
</dbReference>
<dbReference type="GenomeRNAi" id="40796"/>
<dbReference type="PRO" id="PR:Q9VI25"/>
<dbReference type="Proteomes" id="UP000000803">
    <property type="component" value="Chromosome 3R"/>
</dbReference>
<dbReference type="Bgee" id="FBgn0037447">
    <property type="expression patterns" value="Expressed in crop (Drosophila) and 51 other cell types or tissues"/>
</dbReference>
<dbReference type="ExpressionAtlas" id="Q9VI25">
    <property type="expression patterns" value="baseline and differential"/>
</dbReference>
<dbReference type="GO" id="GO:0030425">
    <property type="term" value="C:dendrite"/>
    <property type="evidence" value="ECO:0000250"/>
    <property type="project" value="UniProtKB"/>
</dbReference>
<dbReference type="GO" id="GO:0043025">
    <property type="term" value="C:neuronal cell body"/>
    <property type="evidence" value="ECO:0000250"/>
    <property type="project" value="UniProtKB"/>
</dbReference>
<dbReference type="GO" id="GO:0003012">
    <property type="term" value="P:muscle system process"/>
    <property type="evidence" value="ECO:0000316"/>
    <property type="project" value="FlyBase"/>
</dbReference>
<dbReference type="GO" id="GO:0031175">
    <property type="term" value="P:neuron projection development"/>
    <property type="evidence" value="ECO:0000318"/>
    <property type="project" value="GO_Central"/>
</dbReference>
<dbReference type="GO" id="GO:0048168">
    <property type="term" value="P:regulation of neuronal synaptic plasticity"/>
    <property type="evidence" value="ECO:0000318"/>
    <property type="project" value="GO_Central"/>
</dbReference>
<dbReference type="FunFam" id="1.25.10.10:FF:001715">
    <property type="entry name" value="Neurochondrin homolog"/>
    <property type="match status" value="1"/>
</dbReference>
<dbReference type="Gene3D" id="1.25.10.10">
    <property type="entry name" value="Leucine-rich Repeat Variant"/>
    <property type="match status" value="1"/>
</dbReference>
<dbReference type="InterPro" id="IPR011989">
    <property type="entry name" value="ARM-like"/>
</dbReference>
<dbReference type="InterPro" id="IPR016024">
    <property type="entry name" value="ARM-type_fold"/>
</dbReference>
<dbReference type="InterPro" id="IPR008709">
    <property type="entry name" value="Neurochondrin"/>
</dbReference>
<dbReference type="PANTHER" id="PTHR13109">
    <property type="entry name" value="NEUROCHONDRIN"/>
    <property type="match status" value="1"/>
</dbReference>
<dbReference type="PANTHER" id="PTHR13109:SF7">
    <property type="entry name" value="NEUROCHONDRIN"/>
    <property type="match status" value="1"/>
</dbReference>
<dbReference type="Pfam" id="PF05536">
    <property type="entry name" value="Neurochondrin"/>
    <property type="match status" value="1"/>
</dbReference>
<dbReference type="SUPFAM" id="SSF48371">
    <property type="entry name" value="ARM repeat"/>
    <property type="match status" value="1"/>
</dbReference>
<comment type="function">
    <text>Strongly up-regulated in Mhc mutants suggesting a role in muscle function.</text>
</comment>
<comment type="tissue specificity">
    <text evidence="1">Expressed in both somatic and visceral musculature.</text>
</comment>
<comment type="similarity">
    <text evidence="2">Belongs to the neurochondrin family.</text>
</comment>
<sequence>MTDVPEPVRKCASLLKGTKSDTEKFAALFMVTKLVKGKDCNAAGKKLLFEAIGFPFLKKLLVSKDLPNDCPPLVYKSVALSILTCFCQEEELATHKDIIDAIPTLLEIVEQADDEDYEDNLIVVSEAYSCLKSIASHEPGQQALLATGAIPKMSQIYSAQSFQTDEALHLIVLLVKQFGVVSWPEDPTAFHALIQRIALDMETDDTERKYELCRILADILITCRREIVINSLEGQIWPESLFKGCGDILKAKIGPKQRDPALHLIATTLHVLGIQWAFMDEQKTFFLQLLQLGAIEVRMQMDEKKLETTFKQAELLTCCFSILEHCIEYMATDQLDLEPKEKQTTYTALKGAFNQVLAVLTRVSQDKIRESSNPKDKKFVFAIVKVLSAWLAQETTAMRPAIYKLLPFMLKVANESFQELKTWRAGTREGEPPIDVLRIMLPALCHFAVEEEARRVLFTHKQDEVLLESLEFYFSIAHWKRPPIPRAERLKRMNEPDPVPTPEQQAEMKVARSAIVALCNILMNFTVLEPKKAEDGPTFANLLKFVVENLPELKDTPDNLVIHGNLAVLGLLLLKQQSKKVKQNDFSICRYIQATIRFLWDAYNIDESNDPTALVVSIAYKGYWSDLSELWFLGMQTMCGVLPLVPWLSEFALESGWAEGIVKTLKKVKIGTLPANVKSAYEDFLSQLVDVNGDVQAVLKKADALRVCRNHRMMDLGKKLFGD</sequence>
<name>NCDN_DROME</name>
<gene>
    <name type="primary">Neurochondrin</name>
    <name type="ORF">CG2330</name>
</gene>
<proteinExistence type="evidence at transcript level"/>
<accession>Q9VI25</accession>
<accession>Q8MSV0</accession>